<organism>
    <name type="scientific">Coxiella burnetii (strain RSA 493 / Nine Mile phase I)</name>
    <dbReference type="NCBI Taxonomy" id="227377"/>
    <lineage>
        <taxon>Bacteria</taxon>
        <taxon>Pseudomonadati</taxon>
        <taxon>Pseudomonadota</taxon>
        <taxon>Gammaproteobacteria</taxon>
        <taxon>Legionellales</taxon>
        <taxon>Coxiellaceae</taxon>
        <taxon>Coxiella</taxon>
    </lineage>
</organism>
<keyword id="KW-0012">Acyltransferase</keyword>
<keyword id="KW-0963">Cytoplasm</keyword>
<keyword id="KW-0275">Fatty acid biosynthesis</keyword>
<keyword id="KW-0276">Fatty acid metabolism</keyword>
<keyword id="KW-0444">Lipid biosynthesis</keyword>
<keyword id="KW-0443">Lipid metabolism</keyword>
<keyword id="KW-0511">Multifunctional enzyme</keyword>
<keyword id="KW-1185">Reference proteome</keyword>
<keyword id="KW-0808">Transferase</keyword>
<gene>
    <name evidence="1" type="primary">fabH</name>
    <name type="ordered locus">CBU_0493</name>
</gene>
<accession>Q820X0</accession>
<name>FABH_COXBU</name>
<feature type="chain" id="PRO_0000110421" description="Beta-ketoacyl-[acyl-carrier-protein] synthase III">
    <location>
        <begin position="1"/>
        <end position="319"/>
    </location>
</feature>
<feature type="region of interest" description="ACP-binding" evidence="1">
    <location>
        <begin position="247"/>
        <end position="251"/>
    </location>
</feature>
<feature type="active site" evidence="1">
    <location>
        <position position="115"/>
    </location>
</feature>
<feature type="active site" evidence="1">
    <location>
        <position position="246"/>
    </location>
</feature>
<feature type="active site" evidence="1">
    <location>
        <position position="276"/>
    </location>
</feature>
<evidence type="ECO:0000255" key="1">
    <source>
        <dbReference type="HAMAP-Rule" id="MF_01815"/>
    </source>
</evidence>
<sequence length="319" mass="34745">MTYARIQGVGSYIPQQILSNADLEKMVNTTDEWIMQRVGVRERHVIANSPDNTTTMAVDAAKRAIEMAGIDPAVIDMIIVGTATAEYYFPSTACLVQKHLNLREDIPAFDINAACAGFVYALSIADQYIRNEGAKHILVIGVDSLTKVVDWKDRSTCILFGDGAGAVILQAHKEPGILNTILHANGDYSDLITAKSGVWERESVPHLHMYGKEVFKLAVTKLGEIVDEIIEKSGLKQSDIDWLIPHQANLRIIEATAKRLGLPRERVILTIEQHGNTSAASIPLALDAAVRAGKIKRGDTLLLEAFGAGLAWGAALLKL</sequence>
<proteinExistence type="inferred from homology"/>
<protein>
    <recommendedName>
        <fullName evidence="1">Beta-ketoacyl-[acyl-carrier-protein] synthase III</fullName>
        <shortName evidence="1">Beta-ketoacyl-ACP synthase III</shortName>
        <shortName evidence="1">KAS III</shortName>
        <ecNumber evidence="1">2.3.1.180</ecNumber>
    </recommendedName>
    <alternativeName>
        <fullName evidence="1">3-oxoacyl-[acyl-carrier-protein] synthase 3</fullName>
    </alternativeName>
    <alternativeName>
        <fullName evidence="1">3-oxoacyl-[acyl-carrier-protein] synthase III</fullName>
    </alternativeName>
</protein>
<reference key="1">
    <citation type="journal article" date="2003" name="Proc. Natl. Acad. Sci. U.S.A.">
        <title>Complete genome sequence of the Q-fever pathogen, Coxiella burnetii.</title>
        <authorList>
            <person name="Seshadri R."/>
            <person name="Paulsen I.T."/>
            <person name="Eisen J.A."/>
            <person name="Read T.D."/>
            <person name="Nelson K.E."/>
            <person name="Nelson W.C."/>
            <person name="Ward N.L."/>
            <person name="Tettelin H."/>
            <person name="Davidsen T.M."/>
            <person name="Beanan M.J."/>
            <person name="DeBoy R.T."/>
            <person name="Daugherty S.C."/>
            <person name="Brinkac L.M."/>
            <person name="Madupu R."/>
            <person name="Dodson R.J."/>
            <person name="Khouri H.M."/>
            <person name="Lee K.H."/>
            <person name="Carty H.A."/>
            <person name="Scanlan D."/>
            <person name="Heinzen R.A."/>
            <person name="Thompson H.A."/>
            <person name="Samuel J.E."/>
            <person name="Fraser C.M."/>
            <person name="Heidelberg J.F."/>
        </authorList>
    </citation>
    <scope>NUCLEOTIDE SEQUENCE [LARGE SCALE GENOMIC DNA]</scope>
    <source>
        <strain>RSA 493 / Nine Mile phase I</strain>
    </source>
</reference>
<comment type="function">
    <text evidence="1">Catalyzes the condensation reaction of fatty acid synthesis by the addition to an acyl acceptor of two carbons from malonyl-ACP. Catalyzes the first condensation reaction which initiates fatty acid synthesis and may therefore play a role in governing the total rate of fatty acid production. Possesses both acetoacetyl-ACP synthase and acetyl transacylase activities. Its substrate specificity determines the biosynthesis of branched-chain and/or straight-chain of fatty acids.</text>
</comment>
<comment type="catalytic activity">
    <reaction evidence="1">
        <text>malonyl-[ACP] + acetyl-CoA + H(+) = 3-oxobutanoyl-[ACP] + CO2 + CoA</text>
        <dbReference type="Rhea" id="RHEA:12080"/>
        <dbReference type="Rhea" id="RHEA-COMP:9623"/>
        <dbReference type="Rhea" id="RHEA-COMP:9625"/>
        <dbReference type="ChEBI" id="CHEBI:15378"/>
        <dbReference type="ChEBI" id="CHEBI:16526"/>
        <dbReference type="ChEBI" id="CHEBI:57287"/>
        <dbReference type="ChEBI" id="CHEBI:57288"/>
        <dbReference type="ChEBI" id="CHEBI:78449"/>
        <dbReference type="ChEBI" id="CHEBI:78450"/>
        <dbReference type="EC" id="2.3.1.180"/>
    </reaction>
</comment>
<comment type="pathway">
    <text evidence="1">Lipid metabolism; fatty acid biosynthesis.</text>
</comment>
<comment type="subunit">
    <text evidence="1">Homodimer.</text>
</comment>
<comment type="subcellular location">
    <subcellularLocation>
        <location evidence="1">Cytoplasm</location>
    </subcellularLocation>
</comment>
<comment type="domain">
    <text evidence="1">The last Arg residue of the ACP-binding site is essential for the weak association between ACP/AcpP and FabH.</text>
</comment>
<comment type="similarity">
    <text evidence="1">Belongs to the thiolase-like superfamily. FabH family.</text>
</comment>
<dbReference type="EC" id="2.3.1.180" evidence="1"/>
<dbReference type="EMBL" id="AE016828">
    <property type="protein sequence ID" value="AAO90041.1"/>
    <property type="molecule type" value="Genomic_DNA"/>
</dbReference>
<dbReference type="RefSeq" id="NP_819527.1">
    <property type="nucleotide sequence ID" value="NC_002971.4"/>
</dbReference>
<dbReference type="RefSeq" id="WP_010957613.1">
    <property type="nucleotide sequence ID" value="NC_002971.4"/>
</dbReference>
<dbReference type="SMR" id="Q820X0"/>
<dbReference type="STRING" id="227377.CBU_0493"/>
<dbReference type="EnsemblBacteria" id="AAO90041">
    <property type="protein sequence ID" value="AAO90041"/>
    <property type="gene ID" value="CBU_0493"/>
</dbReference>
<dbReference type="GeneID" id="1208377"/>
<dbReference type="KEGG" id="cbu:CBU_0493"/>
<dbReference type="PATRIC" id="fig|227377.7.peg.484"/>
<dbReference type="eggNOG" id="COG0332">
    <property type="taxonomic scope" value="Bacteria"/>
</dbReference>
<dbReference type="HOGENOM" id="CLU_039592_4_1_6"/>
<dbReference type="OrthoDB" id="9815506at2"/>
<dbReference type="UniPathway" id="UPA00094"/>
<dbReference type="Proteomes" id="UP000002671">
    <property type="component" value="Chromosome"/>
</dbReference>
<dbReference type="GO" id="GO:0005737">
    <property type="term" value="C:cytoplasm"/>
    <property type="evidence" value="ECO:0007669"/>
    <property type="project" value="UniProtKB-SubCell"/>
</dbReference>
<dbReference type="GO" id="GO:0004315">
    <property type="term" value="F:3-oxoacyl-[acyl-carrier-protein] synthase activity"/>
    <property type="evidence" value="ECO:0007669"/>
    <property type="project" value="InterPro"/>
</dbReference>
<dbReference type="GO" id="GO:0033818">
    <property type="term" value="F:beta-ketoacyl-acyl-carrier-protein synthase III activity"/>
    <property type="evidence" value="ECO:0007669"/>
    <property type="project" value="UniProtKB-UniRule"/>
</dbReference>
<dbReference type="GO" id="GO:0006633">
    <property type="term" value="P:fatty acid biosynthetic process"/>
    <property type="evidence" value="ECO:0007669"/>
    <property type="project" value="UniProtKB-UniRule"/>
</dbReference>
<dbReference type="CDD" id="cd00830">
    <property type="entry name" value="KAS_III"/>
    <property type="match status" value="1"/>
</dbReference>
<dbReference type="FunFam" id="3.40.47.10:FF:000004">
    <property type="entry name" value="3-oxoacyl-[acyl-carrier-protein] synthase 3"/>
    <property type="match status" value="1"/>
</dbReference>
<dbReference type="Gene3D" id="3.40.47.10">
    <property type="match status" value="1"/>
</dbReference>
<dbReference type="HAMAP" id="MF_01815">
    <property type="entry name" value="FabH"/>
    <property type="match status" value="1"/>
</dbReference>
<dbReference type="InterPro" id="IPR013747">
    <property type="entry name" value="ACP_syn_III_C"/>
</dbReference>
<dbReference type="InterPro" id="IPR013751">
    <property type="entry name" value="ACP_syn_III_N"/>
</dbReference>
<dbReference type="InterPro" id="IPR004655">
    <property type="entry name" value="FabH"/>
</dbReference>
<dbReference type="InterPro" id="IPR016039">
    <property type="entry name" value="Thiolase-like"/>
</dbReference>
<dbReference type="NCBIfam" id="TIGR00747">
    <property type="entry name" value="fabH"/>
    <property type="match status" value="1"/>
</dbReference>
<dbReference type="NCBIfam" id="NF006829">
    <property type="entry name" value="PRK09352.1"/>
    <property type="match status" value="1"/>
</dbReference>
<dbReference type="PANTHER" id="PTHR43091">
    <property type="entry name" value="3-OXOACYL-[ACYL-CARRIER-PROTEIN] SYNTHASE"/>
    <property type="match status" value="1"/>
</dbReference>
<dbReference type="PANTHER" id="PTHR43091:SF1">
    <property type="entry name" value="BETA-KETOACYL-[ACYL-CARRIER-PROTEIN] SYNTHASE III, CHLOROPLASTIC"/>
    <property type="match status" value="1"/>
</dbReference>
<dbReference type="Pfam" id="PF08545">
    <property type="entry name" value="ACP_syn_III"/>
    <property type="match status" value="1"/>
</dbReference>
<dbReference type="Pfam" id="PF08541">
    <property type="entry name" value="ACP_syn_III_C"/>
    <property type="match status" value="1"/>
</dbReference>
<dbReference type="SUPFAM" id="SSF53901">
    <property type="entry name" value="Thiolase-like"/>
    <property type="match status" value="1"/>
</dbReference>